<name>ALR_RICAE</name>
<protein>
    <recommendedName>
        <fullName evidence="1">Alanine racemase</fullName>
        <ecNumber evidence="1">5.1.1.1</ecNumber>
    </recommendedName>
</protein>
<keyword id="KW-0413">Isomerase</keyword>
<keyword id="KW-0663">Pyridoxal phosphate</keyword>
<evidence type="ECO:0000255" key="1">
    <source>
        <dbReference type="HAMAP-Rule" id="MF_01201"/>
    </source>
</evidence>
<sequence>MSLCTVEINLSTIKNNYLLLQDICKTSLVGAAVKANGYGLGAVQISKALIEENCRHFFVASSEEGVNLRNALGLDVNILVLNGVFEHDALELIEYNLTPVLNNLKQIEIWQKFSNLKNRLLSCYLHFNTGINRLGLSSDEIEQLINDRDLLKGLDLQYIISHLAISEEIDNPYNLEQLNRFKAYLQYFPNVKASLANSGGIFLGQDYHFDLARPGAALYGLNPLTKNPVTLKAPIIHLQNLTLDSHIGYNMTFTTKRDSVIATLPLGYADGFSRNFSNQGEVFINSRSVPIVGRVSMDLINIDVTDLPPSEIFLGQEAEIIGNYCTPDKIASIIGTIGYEVLTNLGSRYKRKYIG</sequence>
<reference key="1">
    <citation type="journal article" date="2009" name="BMC Genomics">
        <title>Analysis of the Rickettsia africae genome reveals that virulence acquisition in Rickettsia species may be explained by genome reduction.</title>
        <authorList>
            <person name="Fournier P.-E."/>
            <person name="El Karkouri K."/>
            <person name="Leroy Q."/>
            <person name="Robert C."/>
            <person name="Giumelli B."/>
            <person name="Renesto P."/>
            <person name="Socolovschi C."/>
            <person name="Parola P."/>
            <person name="Audic S."/>
            <person name="Raoult D."/>
        </authorList>
    </citation>
    <scope>NUCLEOTIDE SEQUENCE [LARGE SCALE GENOMIC DNA]</scope>
    <source>
        <strain>ESF-5</strain>
    </source>
</reference>
<feature type="chain" id="PRO_1000213840" description="Alanine racemase">
    <location>
        <begin position="1"/>
        <end position="355"/>
    </location>
</feature>
<feature type="active site" description="Proton acceptor; specific for D-alanine" evidence="1">
    <location>
        <position position="34"/>
    </location>
</feature>
<feature type="active site" description="Proton acceptor; specific for L-alanine" evidence="1">
    <location>
        <position position="249"/>
    </location>
</feature>
<feature type="binding site" evidence="1">
    <location>
        <position position="133"/>
    </location>
    <ligand>
        <name>substrate</name>
    </ligand>
</feature>
<feature type="binding site" evidence="1">
    <location>
        <position position="297"/>
    </location>
    <ligand>
        <name>substrate</name>
    </ligand>
</feature>
<feature type="modified residue" description="N6-(pyridoxal phosphate)lysine" evidence="1">
    <location>
        <position position="34"/>
    </location>
</feature>
<proteinExistence type="inferred from homology"/>
<gene>
    <name type="primary">alr</name>
    <name type="ordered locus">RAF_ORF0118</name>
</gene>
<organism>
    <name type="scientific">Rickettsia africae (strain ESF-5)</name>
    <dbReference type="NCBI Taxonomy" id="347255"/>
    <lineage>
        <taxon>Bacteria</taxon>
        <taxon>Pseudomonadati</taxon>
        <taxon>Pseudomonadota</taxon>
        <taxon>Alphaproteobacteria</taxon>
        <taxon>Rickettsiales</taxon>
        <taxon>Rickettsiaceae</taxon>
        <taxon>Rickettsieae</taxon>
        <taxon>Rickettsia</taxon>
        <taxon>spotted fever group</taxon>
    </lineage>
</organism>
<comment type="function">
    <text evidence="1">Catalyzes the interconversion of L-alanine and D-alanine. May also act on other amino acids.</text>
</comment>
<comment type="catalytic activity">
    <reaction evidence="1">
        <text>L-alanine = D-alanine</text>
        <dbReference type="Rhea" id="RHEA:20249"/>
        <dbReference type="ChEBI" id="CHEBI:57416"/>
        <dbReference type="ChEBI" id="CHEBI:57972"/>
        <dbReference type="EC" id="5.1.1.1"/>
    </reaction>
</comment>
<comment type="cofactor">
    <cofactor evidence="1">
        <name>pyridoxal 5'-phosphate</name>
        <dbReference type="ChEBI" id="CHEBI:597326"/>
    </cofactor>
</comment>
<comment type="pathway">
    <text evidence="1">Amino-acid biosynthesis; D-alanine biosynthesis; D-alanine from L-alanine: step 1/1.</text>
</comment>
<comment type="similarity">
    <text evidence="1">Belongs to the alanine racemase family.</text>
</comment>
<dbReference type="EC" id="5.1.1.1" evidence="1"/>
<dbReference type="EMBL" id="CP001612">
    <property type="protein sequence ID" value="ACP53091.1"/>
    <property type="molecule type" value="Genomic_DNA"/>
</dbReference>
<dbReference type="RefSeq" id="WP_012719382.1">
    <property type="nucleotide sequence ID" value="NC_012633.1"/>
</dbReference>
<dbReference type="SMR" id="C3PMD1"/>
<dbReference type="KEGG" id="raf:RAF_ORF0118"/>
<dbReference type="HOGENOM" id="CLU_028393_1_1_5"/>
<dbReference type="UniPathway" id="UPA00042">
    <property type="reaction ID" value="UER00497"/>
</dbReference>
<dbReference type="Proteomes" id="UP000002305">
    <property type="component" value="Chromosome"/>
</dbReference>
<dbReference type="GO" id="GO:0005829">
    <property type="term" value="C:cytosol"/>
    <property type="evidence" value="ECO:0007669"/>
    <property type="project" value="TreeGrafter"/>
</dbReference>
<dbReference type="GO" id="GO:0008784">
    <property type="term" value="F:alanine racemase activity"/>
    <property type="evidence" value="ECO:0007669"/>
    <property type="project" value="UniProtKB-UniRule"/>
</dbReference>
<dbReference type="GO" id="GO:0030170">
    <property type="term" value="F:pyridoxal phosphate binding"/>
    <property type="evidence" value="ECO:0007669"/>
    <property type="project" value="UniProtKB-UniRule"/>
</dbReference>
<dbReference type="GO" id="GO:0030632">
    <property type="term" value="P:D-alanine biosynthetic process"/>
    <property type="evidence" value="ECO:0007669"/>
    <property type="project" value="UniProtKB-UniRule"/>
</dbReference>
<dbReference type="CDD" id="cd00430">
    <property type="entry name" value="PLPDE_III_AR"/>
    <property type="match status" value="1"/>
</dbReference>
<dbReference type="Gene3D" id="3.20.20.10">
    <property type="entry name" value="Alanine racemase"/>
    <property type="match status" value="1"/>
</dbReference>
<dbReference type="Gene3D" id="2.40.37.10">
    <property type="entry name" value="Lyase, Ornithine Decarboxylase, Chain A, domain 1"/>
    <property type="match status" value="1"/>
</dbReference>
<dbReference type="HAMAP" id="MF_01201">
    <property type="entry name" value="Ala_racemase"/>
    <property type="match status" value="1"/>
</dbReference>
<dbReference type="InterPro" id="IPR000821">
    <property type="entry name" value="Ala_racemase"/>
</dbReference>
<dbReference type="InterPro" id="IPR009006">
    <property type="entry name" value="Ala_racemase/Decarboxylase_C"/>
</dbReference>
<dbReference type="InterPro" id="IPR011079">
    <property type="entry name" value="Ala_racemase_C"/>
</dbReference>
<dbReference type="InterPro" id="IPR001608">
    <property type="entry name" value="Ala_racemase_N"/>
</dbReference>
<dbReference type="InterPro" id="IPR020622">
    <property type="entry name" value="Ala_racemase_pyridoxalP-BS"/>
</dbReference>
<dbReference type="InterPro" id="IPR029066">
    <property type="entry name" value="PLP-binding_barrel"/>
</dbReference>
<dbReference type="NCBIfam" id="TIGR00492">
    <property type="entry name" value="alr"/>
    <property type="match status" value="1"/>
</dbReference>
<dbReference type="NCBIfam" id="NF000792">
    <property type="entry name" value="PRK00053.2-3"/>
    <property type="match status" value="1"/>
</dbReference>
<dbReference type="PANTHER" id="PTHR30511">
    <property type="entry name" value="ALANINE RACEMASE"/>
    <property type="match status" value="1"/>
</dbReference>
<dbReference type="PANTHER" id="PTHR30511:SF0">
    <property type="entry name" value="ALANINE RACEMASE, CATABOLIC-RELATED"/>
    <property type="match status" value="1"/>
</dbReference>
<dbReference type="Pfam" id="PF00842">
    <property type="entry name" value="Ala_racemase_C"/>
    <property type="match status" value="1"/>
</dbReference>
<dbReference type="Pfam" id="PF01168">
    <property type="entry name" value="Ala_racemase_N"/>
    <property type="match status" value="1"/>
</dbReference>
<dbReference type="PRINTS" id="PR00992">
    <property type="entry name" value="ALARACEMASE"/>
</dbReference>
<dbReference type="SMART" id="SM01005">
    <property type="entry name" value="Ala_racemase_C"/>
    <property type="match status" value="1"/>
</dbReference>
<dbReference type="SUPFAM" id="SSF50621">
    <property type="entry name" value="Alanine racemase C-terminal domain-like"/>
    <property type="match status" value="1"/>
</dbReference>
<dbReference type="SUPFAM" id="SSF51419">
    <property type="entry name" value="PLP-binding barrel"/>
    <property type="match status" value="1"/>
</dbReference>
<dbReference type="PROSITE" id="PS00395">
    <property type="entry name" value="ALANINE_RACEMASE"/>
    <property type="match status" value="1"/>
</dbReference>
<accession>C3PMD1</accession>